<feature type="chain" id="PRO_1000061379" description="Phycocyanobilin:ferredoxin oxidoreductase">
    <location>
        <begin position="1"/>
        <end position="245"/>
    </location>
</feature>
<organism>
    <name type="scientific">Trichodesmium erythraeum (strain IMS101)</name>
    <dbReference type="NCBI Taxonomy" id="203124"/>
    <lineage>
        <taxon>Bacteria</taxon>
        <taxon>Bacillati</taxon>
        <taxon>Cyanobacteriota</taxon>
        <taxon>Cyanophyceae</taxon>
        <taxon>Oscillatoriophycideae</taxon>
        <taxon>Oscillatoriales</taxon>
        <taxon>Microcoleaceae</taxon>
        <taxon>Trichodesmium</taxon>
    </lineage>
</organism>
<proteinExistence type="inferred from homology"/>
<dbReference type="EC" id="1.3.7.5" evidence="1"/>
<dbReference type="EMBL" id="CP000393">
    <property type="protein sequence ID" value="ABG53163.1"/>
    <property type="molecule type" value="Genomic_DNA"/>
</dbReference>
<dbReference type="RefSeq" id="WP_011613493.1">
    <property type="nucleotide sequence ID" value="NC_008312.1"/>
</dbReference>
<dbReference type="SMR" id="Q10X61"/>
<dbReference type="STRING" id="203124.Tery_4156"/>
<dbReference type="KEGG" id="ter:Tery_4156"/>
<dbReference type="eggNOG" id="ENOG502Z7RN">
    <property type="taxonomic scope" value="Bacteria"/>
</dbReference>
<dbReference type="HOGENOM" id="CLU_074224_0_0_3"/>
<dbReference type="OrthoDB" id="581340at2"/>
<dbReference type="GO" id="GO:0050897">
    <property type="term" value="F:cobalt ion binding"/>
    <property type="evidence" value="ECO:0007669"/>
    <property type="project" value="InterPro"/>
</dbReference>
<dbReference type="GO" id="GO:0050620">
    <property type="term" value="F:phycocyanobilin:ferredoxin oxidoreductase activity"/>
    <property type="evidence" value="ECO:0007669"/>
    <property type="project" value="UniProtKB-UniRule"/>
</dbReference>
<dbReference type="GO" id="GO:0010024">
    <property type="term" value="P:phytochromobilin biosynthetic process"/>
    <property type="evidence" value="ECO:0007669"/>
    <property type="project" value="InterPro"/>
</dbReference>
<dbReference type="Gene3D" id="3.40.1500.20">
    <property type="match status" value="1"/>
</dbReference>
<dbReference type="HAMAP" id="MF_00618">
    <property type="entry name" value="Ferredoxin_bilin_red"/>
    <property type="match status" value="1"/>
</dbReference>
<dbReference type="InterPro" id="IPR009249">
    <property type="entry name" value="Ferredoxin-dep_bilin_Rdtase"/>
</dbReference>
<dbReference type="InterPro" id="IPR022870">
    <property type="entry name" value="Ferredoxin_bilin_OxRdtase"/>
</dbReference>
<dbReference type="NCBIfam" id="NF002760">
    <property type="entry name" value="PRK02816.1"/>
    <property type="match status" value="1"/>
</dbReference>
<dbReference type="PANTHER" id="PTHR34557">
    <property type="entry name" value="PHYTOCHROMOBILIN:FERREDOXIN OXIDOREDUCTASE, CHLOROPLASTIC"/>
    <property type="match status" value="1"/>
</dbReference>
<dbReference type="PANTHER" id="PTHR34557:SF1">
    <property type="entry name" value="PHYTOCHROMOBILIN:FERREDOXIN OXIDOREDUCTASE, CHLOROPLASTIC"/>
    <property type="match status" value="1"/>
</dbReference>
<dbReference type="Pfam" id="PF05996">
    <property type="entry name" value="Fe_bilin_red"/>
    <property type="match status" value="1"/>
</dbReference>
<protein>
    <recommendedName>
        <fullName evidence="1">Phycocyanobilin:ferredoxin oxidoreductase</fullName>
        <ecNumber evidence="1">1.3.7.5</ecNumber>
    </recommendedName>
</protein>
<gene>
    <name evidence="1" type="primary">pcyA</name>
    <name type="ordered locus">Tery_4156</name>
</gene>
<evidence type="ECO:0000255" key="1">
    <source>
        <dbReference type="HAMAP-Rule" id="MF_00618"/>
    </source>
</evidence>
<reference key="1">
    <citation type="journal article" date="2015" name="Proc. Natl. Acad. Sci. U.S.A.">
        <title>Trichodesmium genome maintains abundant, widespread noncoding DNA in situ, despite oligotrophic lifestyle.</title>
        <authorList>
            <person name="Walworth N."/>
            <person name="Pfreundt U."/>
            <person name="Nelson W.C."/>
            <person name="Mincer T."/>
            <person name="Heidelberg J.F."/>
            <person name="Fu F."/>
            <person name="Waterbury J.B."/>
            <person name="Glavina del Rio T."/>
            <person name="Goodwin L."/>
            <person name="Kyrpides N.C."/>
            <person name="Land M.L."/>
            <person name="Woyke T."/>
            <person name="Hutchins D.A."/>
            <person name="Hess W.R."/>
            <person name="Webb E.A."/>
        </authorList>
    </citation>
    <scope>NUCLEOTIDE SEQUENCE [LARGE SCALE GENOMIC DNA]</scope>
    <source>
        <strain>IMS101</strain>
    </source>
</reference>
<keyword id="KW-0560">Oxidoreductase</keyword>
<sequence length="245" mass="28277">MLKTSIPSQGIQQNPLVCQLANSIEAVWQRYLNLEPYYLPADLGYVEGRLEGEKLIIQNKCYQTAQFRKLHLELATIGPKLDILHCVMFPRISYPLPIFGTDLVGARGQISAAVVDISPQSQDRKLPEVYNYQLQALPIKEFAHPRQLPQWGEIFSEFCLFIRPTGLEEEQKFISIVESYLEIHCQQAIAQKPVSPEQQLEILKAQHHYCTQQRQNDKTRRVLEKAFGPEWTDYYLTTVLFDSPN</sequence>
<accession>Q10X61</accession>
<comment type="function">
    <text evidence="1">Catalyzes the four-electron reduction of biliverdin IX-alpha (2-electron reduction at both the A and D rings); the reaction proceeds via an isolatable 2-electron intermediate, 181,182-dihydrobiliverdin.</text>
</comment>
<comment type="catalytic activity">
    <reaction evidence="1">
        <text>(2R,3Z)-phycocyanobilin + 4 oxidized [2Fe-2S]-[ferredoxin] = biliverdin IXalpha + 4 reduced [2Fe-2S]-[ferredoxin] + 4 H(+)</text>
        <dbReference type="Rhea" id="RHEA:15309"/>
        <dbReference type="Rhea" id="RHEA-COMP:10000"/>
        <dbReference type="Rhea" id="RHEA-COMP:10001"/>
        <dbReference type="ChEBI" id="CHEBI:15378"/>
        <dbReference type="ChEBI" id="CHEBI:33737"/>
        <dbReference type="ChEBI" id="CHEBI:33738"/>
        <dbReference type="ChEBI" id="CHEBI:57437"/>
        <dbReference type="ChEBI" id="CHEBI:57991"/>
        <dbReference type="EC" id="1.3.7.5"/>
    </reaction>
</comment>
<comment type="similarity">
    <text evidence="1">Belongs to the HY2 family.</text>
</comment>
<name>PCYA_TRIEI</name>